<sequence length="1052" mass="122105">MSMNKFFQPKNALKRAEDLEAVGKPNLALETLHDLLNSSKHKKQWTAVHEEIMIKFLDLCMQLKRAPEAKDGLYQFKIVTGTSAVNSLEKVVRYYLKTAEDKVAEAWQQSQLRDATNVNDEIDDLEEAQTPEQVLLAAVSADGETERANRVQLMPWLRYLWEAYRAVLELLRHHSKMEHAYHATARQAMRFCHQYERRNEFRRLCNMLSLHLNQWRTPYQSKSGQAGIDINNPQTIQYSLDTRFELISYAGKLEQWQEAFRAMEEVTGLLDSAPEKPSPPVWGIYYHKLAQIFWRSKDYAFHAAAWHQMFDNAIRNAKSFNRDDIQYAASAVLLASLTVPLANLDTMVKPMEGYLPEVRASRQQRLAGLLGLSRMPSRDELLQYMFDLNVMTYVHPALKDLYNLVEDEFDPLQLSQKAAPVLEFLKSHEQFAQYVTPLKYILLLRLLKQLSQLYSSLKLERCFKLASFMTPEECEEVLVHAVQDKVLQLRIDHARGSLHFNNNIFAFNERQVNDGPKLQNLQAEMMNGQLTTLSRRLYTAINMIKPAVVQESQMGVKAINRIKDEVAREHVSNLSRRDEIEKQKEELEQSRRRRHQEQMQKHHQNQMQVRQKMAEAVKKNQEELERQKLQLQREEIERQKALEALNDVSSSSAGQKVVQALNKSDLGTKITAQDIHKMAYEQQKKDARERQERLRAEEKRLDHMERAKRLREIPRRKEHIAAMSEQNAKWHTELQSARLEKARVDHAKALGLKELLKAFAPDKDAYIEEKTAERRKEYMAKLDDFKQRMQEQKIRLEREERERKREEKRRAEEEEQRRIKQEEEDRKQREREAKREQERQEQLKLEEAERKKMEEATKLQRQREEQVRAREQEKLSNLSAQTSQPTWKRSARSDAPTTAAPSSMRVSSWKGDASDDSGRSQPFRPSRGGERDSGRSFSGLGDRGDRAPRDTGRSFSGLGDRGDRAPRDTGRSFSGLGDRAPRDFSGRSEPSRSGPRDFSGRSEAGRTSGERRALHVPSGGADKPSGDNVWRSSRGAGSERRVNIPSRGDDKN</sequence>
<feature type="chain" id="PRO_0000366372" description="Eukaryotic translation initiation factor 3 subunit A">
    <location>
        <begin position="1"/>
        <end position="1052"/>
    </location>
</feature>
<feature type="domain" description="PCI" evidence="2">
    <location>
        <begin position="325"/>
        <end position="505"/>
    </location>
</feature>
<feature type="region of interest" description="Disordered" evidence="3">
    <location>
        <begin position="570"/>
        <end position="606"/>
    </location>
</feature>
<feature type="region of interest" description="Disordered" evidence="3">
    <location>
        <begin position="793"/>
        <end position="1052"/>
    </location>
</feature>
<feature type="coiled-coil region" evidence="1">
    <location>
        <begin position="568"/>
        <end position="712"/>
    </location>
</feature>
<feature type="coiled-coil region" evidence="1">
    <location>
        <begin position="769"/>
        <end position="882"/>
    </location>
</feature>
<feature type="compositionally biased region" description="Basic and acidic residues" evidence="3">
    <location>
        <begin position="570"/>
        <end position="600"/>
    </location>
</feature>
<feature type="compositionally biased region" description="Basic and acidic residues" evidence="3">
    <location>
        <begin position="793"/>
        <end position="874"/>
    </location>
</feature>
<feature type="compositionally biased region" description="Polar residues" evidence="3">
    <location>
        <begin position="875"/>
        <end position="887"/>
    </location>
</feature>
<feature type="compositionally biased region" description="Polar residues" evidence="3">
    <location>
        <begin position="895"/>
        <end position="906"/>
    </location>
</feature>
<feature type="compositionally biased region" description="Basic and acidic residues" evidence="3">
    <location>
        <begin position="942"/>
        <end position="952"/>
    </location>
</feature>
<feature type="compositionally biased region" description="Basic and acidic residues" evidence="3">
    <location>
        <begin position="960"/>
        <end position="970"/>
    </location>
</feature>
<feature type="compositionally biased region" description="Basic and acidic residues" evidence="3">
    <location>
        <begin position="979"/>
        <end position="1013"/>
    </location>
</feature>
<feature type="compositionally biased region" description="Basic and acidic residues" evidence="3">
    <location>
        <begin position="1037"/>
        <end position="1052"/>
    </location>
</feature>
<name>EIF3A_MONBE</name>
<keyword id="KW-0175">Coiled coil</keyword>
<keyword id="KW-0963">Cytoplasm</keyword>
<keyword id="KW-0396">Initiation factor</keyword>
<keyword id="KW-0648">Protein biosynthesis</keyword>
<keyword id="KW-1185">Reference proteome</keyword>
<keyword id="KW-0694">RNA-binding</keyword>
<gene>
    <name type="ORF">33388</name>
</gene>
<protein>
    <recommendedName>
        <fullName evidence="1">Eukaryotic translation initiation factor 3 subunit A</fullName>
        <shortName evidence="1">eIF3a</shortName>
    </recommendedName>
    <alternativeName>
        <fullName evidence="1">Eukaryotic translation initiation factor 3 subunit 10</fullName>
    </alternativeName>
</protein>
<proteinExistence type="inferred from homology"/>
<organism>
    <name type="scientific">Monosiga brevicollis</name>
    <name type="common">Choanoflagellate</name>
    <dbReference type="NCBI Taxonomy" id="81824"/>
    <lineage>
        <taxon>Eukaryota</taxon>
        <taxon>Choanoflagellata</taxon>
        <taxon>Craspedida</taxon>
        <taxon>Salpingoecidae</taxon>
        <taxon>Monosiga</taxon>
    </lineage>
</organism>
<reference key="1">
    <citation type="journal article" date="2008" name="Nature">
        <title>The genome of the choanoflagellate Monosiga brevicollis and the origin of metazoans.</title>
        <authorList>
            <consortium name="JGI Sequencing"/>
            <person name="King N."/>
            <person name="Westbrook M.J."/>
            <person name="Young S.L."/>
            <person name="Kuo A."/>
            <person name="Abedin M."/>
            <person name="Chapman J."/>
            <person name="Fairclough S."/>
            <person name="Hellsten U."/>
            <person name="Isogai Y."/>
            <person name="Letunic I."/>
            <person name="Marr M."/>
            <person name="Pincus D."/>
            <person name="Putnam N."/>
            <person name="Rokas A."/>
            <person name="Wright K.J."/>
            <person name="Zuzow R."/>
            <person name="Dirks W."/>
            <person name="Good M."/>
            <person name="Goodstein D."/>
            <person name="Lemons D."/>
            <person name="Li W."/>
            <person name="Lyons J.B."/>
            <person name="Morris A."/>
            <person name="Nichols S."/>
            <person name="Richter D.J."/>
            <person name="Salamov A."/>
            <person name="Bork P."/>
            <person name="Lim W.A."/>
            <person name="Manning G."/>
            <person name="Miller W.T."/>
            <person name="McGinnis W."/>
            <person name="Shapiro H."/>
            <person name="Tjian R."/>
            <person name="Grigoriev I.V."/>
            <person name="Rokhsar D."/>
        </authorList>
    </citation>
    <scope>NUCLEOTIDE SEQUENCE [LARGE SCALE GENOMIC DNA]</scope>
    <source>
        <strain>MX1 / ATCC 50154</strain>
    </source>
</reference>
<dbReference type="EMBL" id="CH991560">
    <property type="protein sequence ID" value="EDQ87212.1"/>
    <property type="molecule type" value="Genomic_DNA"/>
</dbReference>
<dbReference type="RefSeq" id="XP_001747825.1">
    <property type="nucleotide sequence ID" value="XM_001747773.1"/>
</dbReference>
<dbReference type="SMR" id="A9V549"/>
<dbReference type="FunCoup" id="A9V549">
    <property type="interactions" value="1783"/>
</dbReference>
<dbReference type="STRING" id="81824.A9V549"/>
<dbReference type="EnsemblProtists" id="EDQ87212">
    <property type="protein sequence ID" value="EDQ87212"/>
    <property type="gene ID" value="MONBRDRAFT_33388"/>
</dbReference>
<dbReference type="KEGG" id="mbr:MONBRDRAFT_33388"/>
<dbReference type="eggNOG" id="KOG2072">
    <property type="taxonomic scope" value="Eukaryota"/>
</dbReference>
<dbReference type="InParanoid" id="A9V549"/>
<dbReference type="OMA" id="EHITNKR"/>
<dbReference type="Proteomes" id="UP000001357">
    <property type="component" value="Unassembled WGS sequence"/>
</dbReference>
<dbReference type="GO" id="GO:0016282">
    <property type="term" value="C:eukaryotic 43S preinitiation complex"/>
    <property type="evidence" value="ECO:0007669"/>
    <property type="project" value="UniProtKB-UniRule"/>
</dbReference>
<dbReference type="GO" id="GO:0033290">
    <property type="term" value="C:eukaryotic 48S preinitiation complex"/>
    <property type="evidence" value="ECO:0007669"/>
    <property type="project" value="UniProtKB-UniRule"/>
</dbReference>
<dbReference type="GO" id="GO:0071540">
    <property type="term" value="C:eukaryotic translation initiation factor 3 complex, eIF3e"/>
    <property type="evidence" value="ECO:0000318"/>
    <property type="project" value="GO_Central"/>
</dbReference>
<dbReference type="GO" id="GO:0071541">
    <property type="term" value="C:eukaryotic translation initiation factor 3 complex, eIF3m"/>
    <property type="evidence" value="ECO:0000318"/>
    <property type="project" value="GO_Central"/>
</dbReference>
<dbReference type="GO" id="GO:0043614">
    <property type="term" value="C:multi-eIF complex"/>
    <property type="evidence" value="ECO:0000318"/>
    <property type="project" value="GO_Central"/>
</dbReference>
<dbReference type="GO" id="GO:0003729">
    <property type="term" value="F:mRNA binding"/>
    <property type="evidence" value="ECO:0000318"/>
    <property type="project" value="GO_Central"/>
</dbReference>
<dbReference type="GO" id="GO:0003743">
    <property type="term" value="F:translation initiation factor activity"/>
    <property type="evidence" value="ECO:0007669"/>
    <property type="project" value="UniProtKB-UniRule"/>
</dbReference>
<dbReference type="GO" id="GO:0001732">
    <property type="term" value="P:formation of cytoplasmic translation initiation complex"/>
    <property type="evidence" value="ECO:0000318"/>
    <property type="project" value="GO_Central"/>
</dbReference>
<dbReference type="GO" id="GO:0002188">
    <property type="term" value="P:translation reinitiation"/>
    <property type="evidence" value="ECO:0000318"/>
    <property type="project" value="GO_Central"/>
</dbReference>
<dbReference type="Gene3D" id="1.25.40.860">
    <property type="match status" value="2"/>
</dbReference>
<dbReference type="Gene3D" id="4.10.860.10">
    <property type="entry name" value="UVR domain"/>
    <property type="match status" value="1"/>
</dbReference>
<dbReference type="HAMAP" id="MF_03000">
    <property type="entry name" value="eIF3a"/>
    <property type="match status" value="1"/>
</dbReference>
<dbReference type="InterPro" id="IPR027512">
    <property type="entry name" value="EIF3A"/>
</dbReference>
<dbReference type="InterPro" id="IPR054711">
    <property type="entry name" value="eIF3a_PCI_TPR-like"/>
</dbReference>
<dbReference type="InterPro" id="IPR000717">
    <property type="entry name" value="PCI_dom"/>
</dbReference>
<dbReference type="PANTHER" id="PTHR14005:SF0">
    <property type="entry name" value="EUKARYOTIC TRANSLATION INITIATION FACTOR 3 SUBUNIT A"/>
    <property type="match status" value="1"/>
</dbReference>
<dbReference type="PANTHER" id="PTHR14005">
    <property type="entry name" value="EUKARYOTIC TRANSLATION INITIATION FACTOR 3, THETA SUBUNIT"/>
    <property type="match status" value="1"/>
</dbReference>
<dbReference type="Pfam" id="PF22591">
    <property type="entry name" value="eIF3a_PCI_TPR-like"/>
    <property type="match status" value="1"/>
</dbReference>
<dbReference type="Pfam" id="PF01399">
    <property type="entry name" value="PCI"/>
    <property type="match status" value="1"/>
</dbReference>
<dbReference type="PROSITE" id="PS50250">
    <property type="entry name" value="PCI"/>
    <property type="match status" value="1"/>
</dbReference>
<evidence type="ECO:0000255" key="1">
    <source>
        <dbReference type="HAMAP-Rule" id="MF_03000"/>
    </source>
</evidence>
<evidence type="ECO:0000255" key="2">
    <source>
        <dbReference type="PROSITE-ProRule" id="PRU01185"/>
    </source>
</evidence>
<evidence type="ECO:0000256" key="3">
    <source>
        <dbReference type="SAM" id="MobiDB-lite"/>
    </source>
</evidence>
<comment type="function">
    <text evidence="1">RNA-binding component of the eukaryotic translation initiation factor 3 (eIF-3) complex, which is involved in protein synthesis of a specialized repertoire of mRNAs and, together with other initiation factors, stimulates binding of mRNA and methionyl-tRNAi to the 40S ribosome. The eIF-3 complex specifically targets and initiates translation of a subset of mRNAs involved in cell proliferation.</text>
</comment>
<comment type="subunit">
    <text evidence="1">Component of the eukaryotic translation initiation factor 3 (eIF-3) complex.</text>
</comment>
<comment type="subcellular location">
    <subcellularLocation>
        <location evidence="1">Cytoplasm</location>
    </subcellularLocation>
</comment>
<comment type="similarity">
    <text evidence="1">Belongs to the eIF-3 subunit A family.</text>
</comment>
<accession>A9V549</accession>